<dbReference type="EMBL" id="CP000253">
    <property type="protein sequence ID" value="ABD29797.1"/>
    <property type="molecule type" value="Genomic_DNA"/>
</dbReference>
<dbReference type="RefSeq" id="WP_000802946.1">
    <property type="nucleotide sequence ID" value="NZ_LS483365.1"/>
</dbReference>
<dbReference type="RefSeq" id="YP_499223.1">
    <property type="nucleotide sequence ID" value="NC_007795.1"/>
</dbReference>
<dbReference type="SMR" id="Q2G0E1"/>
<dbReference type="STRING" id="93061.SAOUHSC_00664"/>
<dbReference type="PaxDb" id="1280-SAXN108_0725"/>
<dbReference type="GeneID" id="3919954"/>
<dbReference type="KEGG" id="sao:SAOUHSC_00664"/>
<dbReference type="PATRIC" id="fig|93061.5.peg.595"/>
<dbReference type="eggNOG" id="COG0451">
    <property type="taxonomic scope" value="Bacteria"/>
</dbReference>
<dbReference type="HOGENOM" id="CLU_079605_0_0_9"/>
<dbReference type="OrthoDB" id="2408183at2"/>
<dbReference type="Proteomes" id="UP000008816">
    <property type="component" value="Chromosome"/>
</dbReference>
<dbReference type="Gene3D" id="3.40.50.720">
    <property type="entry name" value="NAD(P)-binding Rossmann-like Domain"/>
    <property type="match status" value="1"/>
</dbReference>
<dbReference type="InterPro" id="IPR001509">
    <property type="entry name" value="Epimerase_deHydtase"/>
</dbReference>
<dbReference type="InterPro" id="IPR036291">
    <property type="entry name" value="NAD(P)-bd_dom_sf"/>
</dbReference>
<dbReference type="Pfam" id="PF01370">
    <property type="entry name" value="Epimerase"/>
    <property type="match status" value="1"/>
</dbReference>
<dbReference type="SUPFAM" id="SSF51735">
    <property type="entry name" value="NAD(P)-binding Rossmann-fold domains"/>
    <property type="match status" value="1"/>
</dbReference>
<name>GRAX_STAA8</name>
<protein>
    <recommendedName>
        <fullName>Auxiliary protein GraX</fullName>
    </recommendedName>
</protein>
<sequence length="307" mass="35235">MKPKVLLAGGTGYIGKYLSEVIENDAELFAISKYPDNKKTDDVEMTWIQCDIFHYEQVVAAMNQIDIAVFFIDPTKNSAKITQSSARDLTLIAADNFGRAAAINQVKKVIYIPGSRYDNETIERLGAYGTPVETTNLVFKRSLVNVELQVSKYDDVRSTMKVVLPKGWTLKNVVNHFIAWMGYTKGTFVKTEKSHDQFKIYIKNKVRPLAVFKIEETADGIITLILLSGSLVKKYTVNQGKLEFRLIKESAVVYIHLYDYIPRLFWPIYYFIQAPMQKMMIHGFEVDCRIKDFQSRLKSGENMKYTK</sequence>
<gene>
    <name type="primary">graX</name>
    <name type="ordered locus">SAOUHSC_00664</name>
</gene>
<keyword id="KW-1185">Reference proteome</keyword>
<proteinExistence type="evidence at protein level"/>
<feature type="chain" id="PRO_0000448699" description="Auxiliary protein GraX">
    <location>
        <begin position="1"/>
        <end position="307"/>
    </location>
</feature>
<accession>Q2G0E1</accession>
<evidence type="ECO:0000269" key="1">
    <source>
    </source>
</evidence>
<evidence type="ECO:0000269" key="2">
    <source>
    </source>
</evidence>
<comment type="function">
    <text evidence="1 2">Plays a role in resistance against cationic antimicrobial peptides (CAMPs) (PubMed:21765893, PubMed:25685323). Facilitates the activation of GraS to transduce the signal to GraR (PubMed:25685323).</text>
</comment>
<comment type="subunit">
    <text evidence="2">Homodimer (PubMed:25685323). Interacts with GraR and GraS (PubMed:25685323).</text>
</comment>
<organism>
    <name type="scientific">Staphylococcus aureus (strain NCTC 8325 / PS 47)</name>
    <dbReference type="NCBI Taxonomy" id="93061"/>
    <lineage>
        <taxon>Bacteria</taxon>
        <taxon>Bacillati</taxon>
        <taxon>Bacillota</taxon>
        <taxon>Bacilli</taxon>
        <taxon>Bacillales</taxon>
        <taxon>Staphylococcaceae</taxon>
        <taxon>Staphylococcus</taxon>
    </lineage>
</organism>
<reference key="1">
    <citation type="book" date="2006" name="Gram positive pathogens, 2nd edition">
        <title>The Staphylococcus aureus NCTC 8325 genome.</title>
        <editorList>
            <person name="Fischetti V."/>
            <person name="Novick R."/>
            <person name="Ferretti J."/>
            <person name="Portnoy D."/>
            <person name="Rood J."/>
        </editorList>
        <authorList>
            <person name="Gillaspy A.F."/>
            <person name="Worrell V."/>
            <person name="Orvis J."/>
            <person name="Roe B.A."/>
            <person name="Dyer D.W."/>
            <person name="Iandolo J.J."/>
        </authorList>
    </citation>
    <scope>NUCLEOTIDE SEQUENCE [LARGE SCALE GENOMIC DNA]</scope>
    <source>
        <strain>NCTC 8325 / PS 47</strain>
    </source>
</reference>
<reference key="2">
    <citation type="journal article" date="2011" name="PLoS ONE">
        <title>Investigation of the Staphylococcus aureus GraSR regulon reveals novel links to virulence, stress response and cell wall signal transduction pathways.</title>
        <authorList>
            <person name="Falord M."/>
            <person name="Maeder U."/>
            <person name="Hiron A."/>
            <person name="Debarbouille M."/>
            <person name="Msadek T."/>
        </authorList>
    </citation>
    <scope>FUNCTION</scope>
</reference>
<reference key="3">
    <citation type="journal article" date="2014" name="F1000Research">
        <title>Diversity of two-component systems: insights into the signal transduction mechanism by the Staphylococcus aureus two-component system GraSR.</title>
        <authorList>
            <person name="Muzamal U."/>
            <person name="Gomez D."/>
            <person name="Kapadia F."/>
            <person name="Golemi-Kotra D."/>
        </authorList>
    </citation>
    <scope>FUNCTION</scope>
    <scope>INTERACTION WITH GRAR AND GRAS</scope>
    <scope>SUBUNIT</scope>
</reference>